<reference key="1">
    <citation type="journal article" date="1993" name="Mol. Cell. Biol.">
        <title>cDNA cloning of transcription factor E4TF1 subunits with Ets and notch motifs.</title>
        <authorList>
            <person name="Watanabe H."/>
            <person name="Sawada J."/>
            <person name="Yano K."/>
            <person name="Yamaguchi K."/>
            <person name="Goto M."/>
            <person name="Handa H."/>
        </authorList>
    </citation>
    <scope>NUCLEOTIDE SEQUENCE [MRNA] (ISOFORM 2)</scope>
    <scope>FUNCTION</scope>
    <scope>FUNCTION (MICROBIAL INFECTION)</scope>
    <scope>SUBCELLULAR LOCATION</scope>
</reference>
<reference key="2">
    <citation type="journal article" date="1995" name="Mol. Cell. Biol.">
        <title>Four structurally distinct, non-DNA-binding subunits of human nuclear respiratory factor 2 share a conserved transcriptional activation domain.</title>
        <authorList>
            <person name="Gugneja S."/>
            <person name="Virbasius J.V."/>
            <person name="Scarpulla R.C."/>
        </authorList>
    </citation>
    <scope>NUCLEOTIDE SEQUENCE [MRNA] (ISOFORMS 1; 2; 3 AND 4)</scope>
    <scope>SUBUNIT</scope>
    <scope>SUBCELLULAR LOCATION</scope>
    <source>
        <tissue>Testis</tissue>
    </source>
</reference>
<reference key="3">
    <citation type="submission" date="2007-09" db="EMBL/GenBank/DDBJ databases">
        <authorList>
            <person name="Yang S.J."/>
            <person name="Li K.N."/>
            <person name="Zhang Y.Q."/>
        </authorList>
    </citation>
    <scope>NUCLEOTIDE SEQUENCE [MRNA] (ISOFORM 1)</scope>
    <source>
        <tissue>Hepatoma</tissue>
    </source>
</reference>
<reference key="4">
    <citation type="submission" date="2003-05" db="EMBL/GenBank/DDBJ databases">
        <title>Cloning of human full-length CDSs in BD Creator(TM) system donor vector.</title>
        <authorList>
            <person name="Kalnine N."/>
            <person name="Chen X."/>
            <person name="Rolfs A."/>
            <person name="Halleck A."/>
            <person name="Hines L."/>
            <person name="Eisenstein S."/>
            <person name="Koundinya M."/>
            <person name="Raphael J."/>
            <person name="Moreira D."/>
            <person name="Kelley T."/>
            <person name="LaBaer J."/>
            <person name="Lin Y."/>
            <person name="Phelan M."/>
            <person name="Farmer A."/>
        </authorList>
    </citation>
    <scope>NUCLEOTIDE SEQUENCE [LARGE SCALE MRNA] (ISOFORM 3)</scope>
</reference>
<reference key="5">
    <citation type="submission" date="2005-07" db="EMBL/GenBank/DDBJ databases">
        <authorList>
            <person name="Mural R.J."/>
            <person name="Istrail S."/>
            <person name="Sutton G.G."/>
            <person name="Florea L."/>
            <person name="Halpern A.L."/>
            <person name="Mobarry C.M."/>
            <person name="Lippert R."/>
            <person name="Walenz B."/>
            <person name="Shatkay H."/>
            <person name="Dew I."/>
            <person name="Miller J.R."/>
            <person name="Flanigan M.J."/>
            <person name="Edwards N.J."/>
            <person name="Bolanos R."/>
            <person name="Fasulo D."/>
            <person name="Halldorsson B.V."/>
            <person name="Hannenhalli S."/>
            <person name="Turner R."/>
            <person name="Yooseph S."/>
            <person name="Lu F."/>
            <person name="Nusskern D.R."/>
            <person name="Shue B.C."/>
            <person name="Zheng X.H."/>
            <person name="Zhong F."/>
            <person name="Delcher A.L."/>
            <person name="Huson D.H."/>
            <person name="Kravitz S.A."/>
            <person name="Mouchard L."/>
            <person name="Reinert K."/>
            <person name="Remington K.A."/>
            <person name="Clark A.G."/>
            <person name="Waterman M.S."/>
            <person name="Eichler E.E."/>
            <person name="Adams M.D."/>
            <person name="Hunkapiller M.W."/>
            <person name="Myers E.W."/>
            <person name="Venter J.C."/>
        </authorList>
    </citation>
    <scope>NUCLEOTIDE SEQUENCE [LARGE SCALE GENOMIC DNA]</scope>
</reference>
<reference key="6">
    <citation type="journal article" date="2004" name="Genome Res.">
        <title>The status, quality, and expansion of the NIH full-length cDNA project: the Mammalian Gene Collection (MGC).</title>
        <authorList>
            <consortium name="The MGC Project Team"/>
        </authorList>
    </citation>
    <scope>NUCLEOTIDE SEQUENCE [LARGE SCALE MRNA] (ISOFORMS 1; 2 AND 3)</scope>
    <source>
        <tissue>Prostate</tissue>
        <tissue>Testis</tissue>
        <tissue>Uterus</tissue>
    </source>
</reference>
<reference key="7">
    <citation type="journal article" date="1994" name="Biochemistry">
        <title>Purification and characterization of nuclear factors binding to the negative regulatory element D of human apolipoprotein A-II promoter: a negative regulatory effect is reversed by GABP, an Ets-related protein.</title>
        <authorList>
            <person name="Cardot P."/>
            <person name="Pastier D."/>
            <person name="Lacorte J.-M."/>
            <person name="Mangeney M."/>
            <person name="Zannis V.I."/>
            <person name="Chambaz J."/>
        </authorList>
    </citation>
    <scope>PROTEIN SEQUENCE OF 74-81</scope>
</reference>
<reference key="8">
    <citation type="journal article" date="1993" name="Genes Dev.">
        <title>Identity of GABP with NRF-2, a multisubunit activator of cytochrome oxidase expression, reveals a cellular role for an ETS domain activator of viral promoters.</title>
        <authorList>
            <person name="Virbasius J.V."/>
            <person name="Virbasius C.A."/>
            <person name="Scarpulla R.C."/>
        </authorList>
    </citation>
    <scope>PROTEIN SEQUENCE OF 105-125 AND 339-385</scope>
</reference>
<reference key="9">
    <citation type="journal article" date="1996" name="Mol. Cell. Biol.">
        <title>Nuclear respiratory factors 1 and 2 utilize similar glutamine-containing clusters of hydrophobic residues to activate transcription.</title>
        <authorList>
            <person name="Gugneja S."/>
            <person name="Virbasius C.M."/>
            <person name="Scarpulla R.C."/>
        </authorList>
    </citation>
    <scope>FUNCTION</scope>
    <scope>MUTAGENESIS OF 262-GLN-GLN-263; 264-VAL-VAL-265; 270-GLN-GLN-271; 273-ILE--ILE-275; GLN-295; 297-ILE--VAL-299; 305-GLN-GLN-306 AND 307-VAL--VAL-310</scope>
</reference>
<reference key="10">
    <citation type="journal article" date="2000" name="EMBO J.">
        <title>The novel coactivator C1 (HCF) coordinates multiprotein enhancer formation and mediates transcription activation by GABP.</title>
        <authorList>
            <person name="Vogel J.L."/>
            <person name="Kristie T.M."/>
        </authorList>
    </citation>
    <scope>FUNCTION</scope>
    <scope>INTERACTION WITH HCFC1</scope>
    <scope>MUTAGENESIS OF 264-VAL-VAL-265; 273-ILE--ILE-275; 297-ILE--VAL-299 AND 307-VAL--VAL-310</scope>
</reference>
<reference key="11">
    <citation type="journal article" date="2011" name="BMC Syst. Biol.">
        <title>Initial characterization of the human central proteome.</title>
        <authorList>
            <person name="Burkard T.R."/>
            <person name="Planyavsky M."/>
            <person name="Kaupe I."/>
            <person name="Breitwieser F.P."/>
            <person name="Buerckstuemmer T."/>
            <person name="Bennett K.L."/>
            <person name="Superti-Furga G."/>
            <person name="Colinge J."/>
        </authorList>
    </citation>
    <scope>IDENTIFICATION BY MASS SPECTROMETRY [LARGE SCALE ANALYSIS]</scope>
</reference>
<reference key="12">
    <citation type="journal article" date="2012" name="Proc. Natl. Acad. Sci. U.S.A.">
        <title>N-terminal acetylome analyses and functional insights of the N-terminal acetyltransferase NatB.</title>
        <authorList>
            <person name="Van Damme P."/>
            <person name="Lasa M."/>
            <person name="Polevoda B."/>
            <person name="Gazquez C."/>
            <person name="Elosegui-Artola A."/>
            <person name="Kim D.S."/>
            <person name="De Juan-Pardo E."/>
            <person name="Demeyer K."/>
            <person name="Hole K."/>
            <person name="Larrea E."/>
            <person name="Timmerman E."/>
            <person name="Prieto J."/>
            <person name="Arnesen T."/>
            <person name="Sherman F."/>
            <person name="Gevaert K."/>
            <person name="Aldabe R."/>
        </authorList>
    </citation>
    <scope>ACETYLATION [LARGE SCALE ANALYSIS] AT SER-2</scope>
    <scope>CLEAVAGE OF INITIATOR METHIONINE [LARGE SCALE ANALYSIS]</scope>
    <scope>IDENTIFICATION BY MASS SPECTROMETRY [LARGE SCALE ANALYSIS]</scope>
</reference>
<reference key="13">
    <citation type="journal article" date="2006" name="Science">
        <title>The consensus coding sequences of human breast and colorectal cancers.</title>
        <authorList>
            <person name="Sjoeblom T."/>
            <person name="Jones S."/>
            <person name="Wood L.D."/>
            <person name="Parsons D.W."/>
            <person name="Lin J."/>
            <person name="Barber T.D."/>
            <person name="Mandelker D."/>
            <person name="Leary R.J."/>
            <person name="Ptak J."/>
            <person name="Silliman N."/>
            <person name="Szabo S."/>
            <person name="Buckhaults P."/>
            <person name="Farrell C."/>
            <person name="Meeh P."/>
            <person name="Markowitz S.D."/>
            <person name="Willis J."/>
            <person name="Dawson D."/>
            <person name="Willson J.K.V."/>
            <person name="Gazdar A.F."/>
            <person name="Hartigan J."/>
            <person name="Wu L."/>
            <person name="Liu C."/>
            <person name="Parmigiani G."/>
            <person name="Park B.H."/>
            <person name="Bachman K.E."/>
            <person name="Papadopoulos N."/>
            <person name="Vogelstein B."/>
            <person name="Kinzler K.W."/>
            <person name="Velculescu V.E."/>
        </authorList>
    </citation>
    <scope>VARIANT [LARGE SCALE ANALYSIS] ALA-31</scope>
</reference>
<protein>
    <recommendedName>
        <fullName>GA-binding protein subunit beta-1</fullName>
        <shortName>GABP subunit beta-1</shortName>
        <shortName>GABPB-1</shortName>
    </recommendedName>
    <alternativeName>
        <fullName>GABP subunit beta-2</fullName>
        <shortName>GABPB-2</shortName>
    </alternativeName>
    <alternativeName>
        <fullName>Nuclear respiratory factor 2</fullName>
    </alternativeName>
    <alternativeName>
        <fullName evidence="9">Transcription factor E4TF1-47</fullName>
    </alternativeName>
    <alternativeName>
        <fullName evidence="9">Transcription factor E4TF1-53</fullName>
    </alternativeName>
</protein>
<evidence type="ECO:0000250" key="1">
    <source>
        <dbReference type="UniProtKB" id="Q00420"/>
    </source>
</evidence>
<evidence type="ECO:0000269" key="2">
    <source>
    </source>
</evidence>
<evidence type="ECO:0000269" key="3">
    <source>
    </source>
</evidence>
<evidence type="ECO:0000269" key="4">
    <source>
    </source>
</evidence>
<evidence type="ECO:0000269" key="5">
    <source>
    </source>
</evidence>
<evidence type="ECO:0000269" key="6">
    <source>
    </source>
</evidence>
<evidence type="ECO:0000303" key="7">
    <source>
    </source>
</evidence>
<evidence type="ECO:0000303" key="8">
    <source>
    </source>
</evidence>
<evidence type="ECO:0000303" key="9">
    <source>
    </source>
</evidence>
<evidence type="ECO:0000303" key="10">
    <source ref="4"/>
</evidence>
<evidence type="ECO:0000305" key="11"/>
<evidence type="ECO:0000305" key="12">
    <source>
    </source>
</evidence>
<evidence type="ECO:0000305" key="13">
    <source>
    </source>
</evidence>
<evidence type="ECO:0007744" key="14">
    <source>
    </source>
</evidence>
<dbReference type="EMBL" id="D13316">
    <property type="protein sequence ID" value="BAA02573.1"/>
    <property type="molecule type" value="mRNA"/>
</dbReference>
<dbReference type="EMBL" id="D13317">
    <property type="protein sequence ID" value="BAA02574.1"/>
    <property type="molecule type" value="mRNA"/>
</dbReference>
<dbReference type="EMBL" id="U13045">
    <property type="protein sequence ID" value="AAA65707.1"/>
    <property type="molecule type" value="mRNA"/>
</dbReference>
<dbReference type="EMBL" id="U13046">
    <property type="protein sequence ID" value="AAA65708.1"/>
    <property type="molecule type" value="mRNA"/>
</dbReference>
<dbReference type="EMBL" id="U13047">
    <property type="protein sequence ID" value="AAA65709.1"/>
    <property type="molecule type" value="mRNA"/>
</dbReference>
<dbReference type="EMBL" id="U13048">
    <property type="protein sequence ID" value="AAA65710.1"/>
    <property type="molecule type" value="mRNA"/>
</dbReference>
<dbReference type="EMBL" id="EU159454">
    <property type="protein sequence ID" value="ABV90874.1"/>
    <property type="molecule type" value="mRNA"/>
</dbReference>
<dbReference type="EMBL" id="BT006652">
    <property type="protein sequence ID" value="AAP35298.1"/>
    <property type="molecule type" value="mRNA"/>
</dbReference>
<dbReference type="EMBL" id="CH471082">
    <property type="protein sequence ID" value="EAW77395.1"/>
    <property type="molecule type" value="Genomic_DNA"/>
</dbReference>
<dbReference type="EMBL" id="BC016910">
    <property type="protein sequence ID" value="AAH16910.1"/>
    <property type="molecule type" value="mRNA"/>
</dbReference>
<dbReference type="EMBL" id="BC036080">
    <property type="protein sequence ID" value="AAH36080.1"/>
    <property type="molecule type" value="mRNA"/>
</dbReference>
<dbReference type="EMBL" id="BC050702">
    <property type="protein sequence ID" value="AAH50702.1"/>
    <property type="molecule type" value="mRNA"/>
</dbReference>
<dbReference type="CCDS" id="CCDS10135.1">
    <molecule id="Q06547-2"/>
</dbReference>
<dbReference type="CCDS" id="CCDS10136.1">
    <molecule id="Q06547-4"/>
</dbReference>
<dbReference type="CCDS" id="CCDS32239.1">
    <molecule id="Q06547-1"/>
</dbReference>
<dbReference type="CCDS" id="CCDS45258.1">
    <molecule id="Q06547-3"/>
</dbReference>
<dbReference type="PIR" id="C48146">
    <property type="entry name" value="C48146"/>
</dbReference>
<dbReference type="PIR" id="I38741">
    <property type="entry name" value="I38741"/>
</dbReference>
<dbReference type="PIR" id="I38743">
    <property type="entry name" value="I38743"/>
</dbReference>
<dbReference type="PIR" id="I38744">
    <property type="entry name" value="I38744"/>
</dbReference>
<dbReference type="RefSeq" id="NP_001307839.1">
    <molecule id="Q06547-1"/>
    <property type="nucleotide sequence ID" value="NM_001320910.2"/>
</dbReference>
<dbReference type="RefSeq" id="NP_002032.2">
    <molecule id="Q06547-3"/>
    <property type="nucleotide sequence ID" value="NM_002041.4"/>
</dbReference>
<dbReference type="RefSeq" id="NP_005245.2">
    <molecule id="Q06547-1"/>
    <property type="nucleotide sequence ID" value="NM_005254.5"/>
</dbReference>
<dbReference type="RefSeq" id="NP_057738.1">
    <molecule id="Q06547-2"/>
    <property type="nucleotide sequence ID" value="NM_016654.5"/>
</dbReference>
<dbReference type="RefSeq" id="NP_057739.1">
    <molecule id="Q06547-4"/>
    <property type="nucleotide sequence ID" value="NM_016655.5"/>
</dbReference>
<dbReference type="RefSeq" id="NP_852092.1">
    <molecule id="Q06547-4"/>
    <property type="nucleotide sequence ID" value="NM_181427.4"/>
</dbReference>
<dbReference type="RefSeq" id="XP_005254331.1">
    <molecule id="Q06547-1"/>
    <property type="nucleotide sequence ID" value="XM_005254274.5"/>
</dbReference>
<dbReference type="RefSeq" id="XP_016877542.1">
    <molecule id="Q06547-2"/>
    <property type="nucleotide sequence ID" value="XM_017022053.3"/>
</dbReference>
<dbReference type="RefSeq" id="XP_054233632.1">
    <molecule id="Q06547-1"/>
    <property type="nucleotide sequence ID" value="XM_054377657.1"/>
</dbReference>
<dbReference type="RefSeq" id="XP_054233635.1">
    <molecule id="Q06547-2"/>
    <property type="nucleotide sequence ID" value="XM_054377660.1"/>
</dbReference>
<dbReference type="EMDB" id="EMD-27750"/>
<dbReference type="SMR" id="Q06547"/>
<dbReference type="BioGRID" id="108827">
    <property type="interactions" value="45"/>
</dbReference>
<dbReference type="DIP" id="DIP-33979N"/>
<dbReference type="FunCoup" id="Q06547">
    <property type="interactions" value="6225"/>
</dbReference>
<dbReference type="IntAct" id="Q06547">
    <property type="interactions" value="70"/>
</dbReference>
<dbReference type="MINT" id="Q06547"/>
<dbReference type="STRING" id="9606.ENSP00000220429"/>
<dbReference type="GlyCosmos" id="Q06547">
    <property type="glycosylation" value="3 sites, 2 glycans"/>
</dbReference>
<dbReference type="GlyGen" id="Q06547">
    <property type="glycosylation" value="3 sites, 2 O-linked glycans (3 sites)"/>
</dbReference>
<dbReference type="iPTMnet" id="Q06547"/>
<dbReference type="PhosphoSitePlus" id="Q06547"/>
<dbReference type="BioMuta" id="GABPB1"/>
<dbReference type="DMDM" id="23503070"/>
<dbReference type="jPOST" id="Q06547"/>
<dbReference type="MassIVE" id="Q06547"/>
<dbReference type="PaxDb" id="9606-ENSP00000220429"/>
<dbReference type="PeptideAtlas" id="Q06547"/>
<dbReference type="ProteomicsDB" id="58458">
    <molecule id="Q06547-1"/>
</dbReference>
<dbReference type="ProteomicsDB" id="58459">
    <molecule id="Q06547-2"/>
</dbReference>
<dbReference type="ProteomicsDB" id="58460">
    <molecule id="Q06547-3"/>
</dbReference>
<dbReference type="ProteomicsDB" id="58461">
    <molecule id="Q06547-4"/>
</dbReference>
<dbReference type="Pumba" id="Q06547"/>
<dbReference type="Antibodypedia" id="1425">
    <property type="antibodies" value="337 antibodies from 33 providers"/>
</dbReference>
<dbReference type="DNASU" id="2553"/>
<dbReference type="Ensembl" id="ENST00000220429.12">
    <molecule id="Q06547-1"/>
    <property type="protein sequence ID" value="ENSP00000220429.8"/>
    <property type="gene ID" value="ENSG00000104064.18"/>
</dbReference>
<dbReference type="Ensembl" id="ENST00000359031.8">
    <molecule id="Q06547-4"/>
    <property type="protein sequence ID" value="ENSP00000351923.4"/>
    <property type="gene ID" value="ENSG00000104064.18"/>
</dbReference>
<dbReference type="Ensembl" id="ENST00000380877.8">
    <molecule id="Q06547-2"/>
    <property type="protein sequence ID" value="ENSP00000370259.3"/>
    <property type="gene ID" value="ENSG00000104064.18"/>
</dbReference>
<dbReference type="Ensembl" id="ENST00000396464.7">
    <molecule id="Q06547-4"/>
    <property type="protein sequence ID" value="ENSP00000379728.3"/>
    <property type="gene ID" value="ENSG00000104064.18"/>
</dbReference>
<dbReference type="Ensembl" id="ENST00000429662.6">
    <molecule id="Q06547-3"/>
    <property type="protein sequence ID" value="ENSP00000395771.2"/>
    <property type="gene ID" value="ENSG00000104064.18"/>
</dbReference>
<dbReference type="GeneID" id="2553"/>
<dbReference type="KEGG" id="hsa:2553"/>
<dbReference type="MANE-Select" id="ENST00000380877.8">
    <molecule id="Q06547-2"/>
    <property type="protein sequence ID" value="ENSP00000370259.3"/>
    <property type="RefSeq nucleotide sequence ID" value="NM_016654.5"/>
    <property type="RefSeq protein sequence ID" value="NP_057738.1"/>
</dbReference>
<dbReference type="UCSC" id="uc001zya.4">
    <molecule id="Q06547-1"/>
    <property type="organism name" value="human"/>
</dbReference>
<dbReference type="AGR" id="HGNC:4074"/>
<dbReference type="CTD" id="2553"/>
<dbReference type="DisGeNET" id="2553"/>
<dbReference type="GeneCards" id="GABPB1"/>
<dbReference type="HGNC" id="HGNC:4074">
    <property type="gene designation" value="GABPB1"/>
</dbReference>
<dbReference type="HPA" id="ENSG00000104064">
    <property type="expression patterns" value="Low tissue specificity"/>
</dbReference>
<dbReference type="MIM" id="600610">
    <property type="type" value="gene"/>
</dbReference>
<dbReference type="neXtProt" id="NX_Q06547"/>
<dbReference type="OpenTargets" id="ENSG00000104064"/>
<dbReference type="PharmGKB" id="PA162389163"/>
<dbReference type="VEuPathDB" id="HostDB:ENSG00000104064"/>
<dbReference type="eggNOG" id="ENOG502QRTX">
    <property type="taxonomic scope" value="Eukaryota"/>
</dbReference>
<dbReference type="GeneTree" id="ENSGT00940000157875"/>
<dbReference type="HOGENOM" id="CLU_000134_12_0_1"/>
<dbReference type="InParanoid" id="Q06547"/>
<dbReference type="OMA" id="PXEREAL"/>
<dbReference type="OrthoDB" id="341259at2759"/>
<dbReference type="PAN-GO" id="Q06547">
    <property type="GO annotations" value="3 GO annotations based on evolutionary models"/>
</dbReference>
<dbReference type="PhylomeDB" id="Q06547"/>
<dbReference type="TreeFam" id="TF326036"/>
<dbReference type="PathwayCommons" id="Q06547"/>
<dbReference type="Reactome" id="R-HSA-2151201">
    <property type="pathway name" value="Transcriptional activation of mitochondrial biogenesis"/>
</dbReference>
<dbReference type="SignaLink" id="Q06547"/>
<dbReference type="SIGNOR" id="Q06547"/>
<dbReference type="BioGRID-ORCS" id="2553">
    <property type="hits" value="365 hits in 1170 CRISPR screens"/>
</dbReference>
<dbReference type="ChiTaRS" id="GABPB1">
    <property type="organism name" value="human"/>
</dbReference>
<dbReference type="GeneWiki" id="GABPB2"/>
<dbReference type="GenomeRNAi" id="2553"/>
<dbReference type="Pharos" id="Q06547">
    <property type="development level" value="Tbio"/>
</dbReference>
<dbReference type="PRO" id="PR:Q06547"/>
<dbReference type="Proteomes" id="UP000005640">
    <property type="component" value="Chromosome 15"/>
</dbReference>
<dbReference type="RNAct" id="Q06547">
    <property type="molecule type" value="protein"/>
</dbReference>
<dbReference type="Bgee" id="ENSG00000104064">
    <property type="expression patterns" value="Expressed in secondary oocyte and 181 other cell types or tissues"/>
</dbReference>
<dbReference type="ExpressionAtlas" id="Q06547">
    <property type="expression patterns" value="baseline and differential"/>
</dbReference>
<dbReference type="GO" id="GO:0036464">
    <property type="term" value="C:cytoplasmic ribonucleoprotein granule"/>
    <property type="evidence" value="ECO:0000314"/>
    <property type="project" value="HPA"/>
</dbReference>
<dbReference type="GO" id="GO:0005654">
    <property type="term" value="C:nucleoplasm"/>
    <property type="evidence" value="ECO:0000314"/>
    <property type="project" value="HPA"/>
</dbReference>
<dbReference type="GO" id="GO:0005634">
    <property type="term" value="C:nucleus"/>
    <property type="evidence" value="ECO:0000314"/>
    <property type="project" value="MGI"/>
</dbReference>
<dbReference type="GO" id="GO:0000976">
    <property type="term" value="F:transcription cis-regulatory region binding"/>
    <property type="evidence" value="ECO:0000314"/>
    <property type="project" value="MGI"/>
</dbReference>
<dbReference type="GO" id="GO:0007005">
    <property type="term" value="P:mitochondrion organization"/>
    <property type="evidence" value="ECO:0000250"/>
    <property type="project" value="UniProtKB"/>
</dbReference>
<dbReference type="GO" id="GO:0045944">
    <property type="term" value="P:positive regulation of transcription by RNA polymerase II"/>
    <property type="evidence" value="ECO:0000314"/>
    <property type="project" value="MGI"/>
</dbReference>
<dbReference type="FunFam" id="1.25.40.20:FF:000025">
    <property type="entry name" value="GA-binding protein subunit beta-1 isoform X1"/>
    <property type="match status" value="1"/>
</dbReference>
<dbReference type="Gene3D" id="1.25.40.20">
    <property type="entry name" value="Ankyrin repeat-containing domain"/>
    <property type="match status" value="1"/>
</dbReference>
<dbReference type="InterPro" id="IPR050663">
    <property type="entry name" value="Ankyrin-SOCS_Box"/>
</dbReference>
<dbReference type="InterPro" id="IPR002110">
    <property type="entry name" value="Ankyrin_rpt"/>
</dbReference>
<dbReference type="InterPro" id="IPR036770">
    <property type="entry name" value="Ankyrin_rpt-contain_sf"/>
</dbReference>
<dbReference type="PANTHER" id="PTHR24193">
    <property type="entry name" value="ANKYRIN REPEAT PROTEIN"/>
    <property type="match status" value="1"/>
</dbReference>
<dbReference type="PANTHER" id="PTHR24193:SF76">
    <property type="entry name" value="GA-BINDING PROTEIN SUBUNIT BETA-1"/>
    <property type="match status" value="1"/>
</dbReference>
<dbReference type="Pfam" id="PF12796">
    <property type="entry name" value="Ank_2"/>
    <property type="match status" value="1"/>
</dbReference>
<dbReference type="PRINTS" id="PR01415">
    <property type="entry name" value="ANKYRIN"/>
</dbReference>
<dbReference type="SMART" id="SM00248">
    <property type="entry name" value="ANK"/>
    <property type="match status" value="4"/>
</dbReference>
<dbReference type="SUPFAM" id="SSF48403">
    <property type="entry name" value="Ankyrin repeat"/>
    <property type="match status" value="1"/>
</dbReference>
<dbReference type="PROSITE" id="PS50297">
    <property type="entry name" value="ANK_REP_REGION"/>
    <property type="match status" value="1"/>
</dbReference>
<dbReference type="PROSITE" id="PS50088">
    <property type="entry name" value="ANK_REPEAT"/>
    <property type="match status" value="3"/>
</dbReference>
<sequence>MSLVDLGKKLLEAARAGQDDEVRILMANGAPFTTDWLGTSPLHLAAQYGHYSTTEVLLRAGVSRDARTKVDRTPLHMAASEGHASIVEVLLKHGADVNAKDMLKMTALHWATEHNHQEVVELLIKYGADVHTQSKFCKTAFDISIDNGNEDLAEILQIAMQNQINTNPESPDTVTIHAATPQFIIGPGGVVNLTGLVSSENSSKATDETGVSAVQFGNSSTSVLATLAALAEASAPLSNSSETPVVATEEVVTAESVDGAIQQVVSSGGQQVITIVTDGIQLGNLHSIPTSGIGQPIIVTMPDGQQVLTVPATDIAEETVISEEPPAKRQCIEIIENRVESAEIEEREALQKQLDEANREAQKYRQQLLKKEQEAEAYRQKLEAMTRLQTNKEAV</sequence>
<comment type="function">
    <text evidence="1 2 5 6">Transcription factor capable of interacting with purine rich repeats (GA repeats) (PubMed:10675337, PubMed:8441384, PubMed:8816484). Acts as a master regulator of nuclear-encoded mitochondrial genes (By similarity).</text>
</comment>
<comment type="function">
    <text evidence="5">(Microbial infection) Necessary for the expression of the Adenovirus E4 gene.</text>
</comment>
<comment type="subunit">
    <text evidence="2 4">Heterotetramer of two alpha and two beta subunits (PubMed:7799916). Interacts with HCFC1, causing repression of transcriptional activity (PubMed:10675337).</text>
</comment>
<comment type="interaction">
    <interactant intactId="EBI-618165">
        <id>Q06547</id>
    </interactant>
    <interactant intactId="EBI-712648">
        <id>O95994</id>
        <label>AGR2</label>
    </interactant>
    <organismsDiffer>false</organismsDiffer>
    <experiments>3</experiments>
</comment>
<comment type="interaction">
    <interactant intactId="EBI-618165">
        <id>Q06547</id>
    </interactant>
    <interactant intactId="EBI-6658203">
        <id>Q86YD7</id>
        <label>FAM90A1</label>
    </interactant>
    <organismsDiffer>false</organismsDiffer>
    <experiments>3</experiments>
</comment>
<comment type="interaction">
    <interactant intactId="EBI-618165">
        <id>Q06547</id>
    </interactant>
    <interactant intactId="EBI-638925">
        <id>Q06546</id>
        <label>GABPA</label>
    </interactant>
    <organismsDiffer>false</organismsDiffer>
    <experiments>6</experiments>
</comment>
<comment type="interaction">
    <interactant intactId="EBI-618165">
        <id>Q06547</id>
    </interactant>
    <interactant intactId="EBI-396176">
        <id>P51610</id>
        <label>HCFC1</label>
    </interactant>
    <organismsDiffer>false</organismsDiffer>
    <experiments>3</experiments>
</comment>
<comment type="interaction">
    <interactant intactId="EBI-618165">
        <id>Q06547</id>
    </interactant>
    <interactant intactId="EBI-17178971">
        <id>Q14005-2</id>
        <label>IL16</label>
    </interactant>
    <organismsDiffer>false</organismsDiffer>
    <experiments>3</experiments>
</comment>
<comment type="interaction">
    <interactant intactId="EBI-618165">
        <id>Q06547</id>
    </interactant>
    <interactant intactId="EBI-8639312">
        <id>P25800</id>
        <label>LMO1</label>
    </interactant>
    <organismsDiffer>false</organismsDiffer>
    <experiments>4</experiments>
</comment>
<comment type="interaction">
    <interactant intactId="EBI-618165">
        <id>Q06547</id>
    </interactant>
    <interactant intactId="EBI-2798728">
        <id>P61968</id>
        <label>LMO4</label>
    </interactant>
    <organismsDiffer>false</organismsDiffer>
    <experiments>6</experiments>
</comment>
<comment type="interaction">
    <interactant intactId="EBI-618165">
        <id>Q06547</id>
    </interactant>
    <interactant intactId="EBI-741835">
        <id>Q96M61</id>
        <label>MAGEB18</label>
    </interactant>
    <organismsDiffer>false</organismsDiffer>
    <experiments>3</experiments>
</comment>
<comment type="interaction">
    <interactant intactId="EBI-618165">
        <id>Q06547</id>
    </interactant>
    <interactant intactId="EBI-394644">
        <id>Q9H944</id>
        <label>MED20</label>
    </interactant>
    <organismsDiffer>false</organismsDiffer>
    <experiments>3</experiments>
</comment>
<comment type="interaction">
    <interactant intactId="EBI-618165">
        <id>Q06547</id>
    </interactant>
    <interactant intactId="EBI-1389308">
        <id>Q7Z3K3</id>
        <label>POGZ</label>
    </interactant>
    <organismsDiffer>false</organismsDiffer>
    <experiments>5</experiments>
</comment>
<comment type="interaction">
    <interactant intactId="EBI-618165">
        <id>Q06547</id>
    </interactant>
    <interactant intactId="EBI-741332">
        <id>P57052</id>
        <label>RBM11</label>
    </interactant>
    <organismsDiffer>false</organismsDiffer>
    <experiments>3</experiments>
</comment>
<comment type="interaction">
    <interactant intactId="EBI-618165">
        <id>Q06547</id>
    </interactant>
    <interactant intactId="EBI-748350">
        <id>Q9UHP6</id>
        <label>RSPH14</label>
    </interactant>
    <organismsDiffer>false</organismsDiffer>
    <experiments>3</experiments>
</comment>
<comment type="interaction">
    <interactant intactId="EBI-618165">
        <id>Q06547</id>
    </interactant>
    <interactant intactId="EBI-607085">
        <id>P09012</id>
        <label>SNRPA</label>
    </interactant>
    <organismsDiffer>false</organismsDiffer>
    <experiments>3</experiments>
</comment>
<comment type="interaction">
    <interactant intactId="EBI-618165">
        <id>Q06547</id>
    </interactant>
    <interactant intactId="EBI-1053651">
        <id>P08579</id>
        <label>SNRPB2</label>
    </interactant>
    <organismsDiffer>false</organismsDiffer>
    <experiments>3</experiments>
</comment>
<comment type="interaction">
    <interactant intactId="EBI-618165">
        <id>Q06547</id>
    </interactant>
    <interactant intactId="EBI-632715">
        <id>Q13573</id>
        <label>SNW1</label>
    </interactant>
    <organismsDiffer>false</organismsDiffer>
    <experiments>3</experiments>
</comment>
<comment type="interaction">
    <interactant intactId="EBI-618165">
        <id>Q06547</id>
    </interactant>
    <interactant intactId="EBI-624505">
        <id>Q8NHU6</id>
        <label>TDRD7</label>
    </interactant>
    <organismsDiffer>false</organismsDiffer>
    <experiments>5</experiments>
</comment>
<comment type="interaction">
    <interactant intactId="EBI-618165">
        <id>Q06547</id>
    </interactant>
    <interactant intactId="EBI-355744">
        <id>Q12933</id>
        <label>TRAF2</label>
    </interactant>
    <organismsDiffer>false</organismsDiffer>
    <experiments>7</experiments>
</comment>
<comment type="interaction">
    <interactant intactId="EBI-618165">
        <id>Q06547</id>
    </interactant>
    <interactant intactId="EBI-8014984">
        <id>Q8CGM1</id>
        <label>Adgrb2</label>
    </interactant>
    <organismsDiffer>true</organismsDiffer>
    <experiments>3</experiments>
</comment>
<comment type="interaction">
    <interactant intactId="EBI-618189">
        <id>Q06547-2</id>
    </interactant>
    <interactant intactId="EBI-930964">
        <id>P54253</id>
        <label>ATXN1</label>
    </interactant>
    <organismsDiffer>false</organismsDiffer>
    <experiments>6</experiments>
</comment>
<comment type="interaction">
    <interactant intactId="EBI-618189">
        <id>Q06547-2</id>
    </interactant>
    <interactant intactId="EBI-6875961">
        <id>P02489</id>
        <label>CRYAA</label>
    </interactant>
    <organismsDiffer>false</organismsDiffer>
    <experiments>3</experiments>
</comment>
<comment type="interaction">
    <interactant intactId="EBI-618189">
        <id>Q06547-2</id>
    </interactant>
    <interactant intactId="EBI-357034">
        <id>P25685</id>
        <label>DNAJB1</label>
    </interactant>
    <organismsDiffer>false</organismsDiffer>
    <experiments>3</experiments>
</comment>
<comment type="interaction">
    <interactant intactId="EBI-618189">
        <id>Q06547-2</id>
    </interactant>
    <interactant intactId="EBI-1054228">
        <id>P41091</id>
        <label>EIF2S3</label>
    </interactant>
    <organismsDiffer>false</organismsDiffer>
    <experiments>3</experiments>
</comment>
<comment type="interaction">
    <interactant intactId="EBI-618189">
        <id>Q06547-2</id>
    </interactant>
    <interactant intactId="EBI-25852368">
        <id>O75460-2</id>
        <label>ERN1</label>
    </interactant>
    <organismsDiffer>false</organismsDiffer>
    <experiments>3</experiments>
</comment>
<comment type="interaction">
    <interactant intactId="EBI-618189">
        <id>Q06547-2</id>
    </interactant>
    <interactant intactId="EBI-348399">
        <id>P22607</id>
        <label>FGFR3</label>
    </interactant>
    <organismsDiffer>false</organismsDiffer>
    <experiments>3</experiments>
</comment>
<comment type="interaction">
    <interactant intactId="EBI-618189">
        <id>Q06547-2</id>
    </interactant>
    <interactant intactId="EBI-10226858">
        <id>Q0VDC6</id>
        <label>FKBP1A</label>
    </interactant>
    <organismsDiffer>false</organismsDiffer>
    <experiments>3</experiments>
</comment>
<comment type="interaction">
    <interactant intactId="EBI-618189">
        <id>Q06547-2</id>
    </interactant>
    <interactant intactId="EBI-25913156">
        <id>O14908-2</id>
        <label>GIPC1</label>
    </interactant>
    <organismsDiffer>false</organismsDiffer>
    <experiments>3</experiments>
</comment>
<comment type="interaction">
    <interactant intactId="EBI-618189">
        <id>Q06547-2</id>
    </interactant>
    <interactant intactId="EBI-8285963">
        <id>Q14957</id>
        <label>GRIN2C</label>
    </interactant>
    <organismsDiffer>false</organismsDiffer>
    <experiments>3</experiments>
</comment>
<comment type="interaction">
    <interactant intactId="EBI-618189">
        <id>Q06547-2</id>
    </interactant>
    <interactant intactId="EBI-396176">
        <id>P51610</id>
        <label>HCFC1</label>
    </interactant>
    <organismsDiffer>false</organismsDiffer>
    <experiments>6</experiments>
</comment>
<comment type="interaction">
    <interactant intactId="EBI-618189">
        <id>Q06547-2</id>
    </interactant>
    <interactant intactId="EBI-356991">
        <id>P54652</id>
        <label>HSPA2</label>
    </interactant>
    <organismsDiffer>false</organismsDiffer>
    <experiments>3</experiments>
</comment>
<comment type="interaction">
    <interactant intactId="EBI-618189">
        <id>Q06547-2</id>
    </interactant>
    <interactant intactId="EBI-399080">
        <id>Q92993</id>
        <label>KAT5</label>
    </interactant>
    <organismsDiffer>false</organismsDiffer>
    <experiments>3</experiments>
</comment>
<comment type="interaction">
    <interactant intactId="EBI-618189">
        <id>Q06547-2</id>
    </interactant>
    <interactant intactId="EBI-948266">
        <id>O14901</id>
        <label>KLF11</label>
    </interactant>
    <organismsDiffer>false</organismsDiffer>
    <experiments>3</experiments>
</comment>
<comment type="interaction">
    <interactant intactId="EBI-618189">
        <id>Q06547-2</id>
    </interactant>
    <interactant intactId="EBI-11742507">
        <id>Q8TAP4-4</id>
        <label>LMO3</label>
    </interactant>
    <organismsDiffer>false</organismsDiffer>
    <experiments>3</experiments>
</comment>
<comment type="interaction">
    <interactant intactId="EBI-618189">
        <id>Q06547-2</id>
    </interactant>
    <interactant intactId="EBI-2811583">
        <id>Q9BVL2</id>
        <label>NUP58</label>
    </interactant>
    <organismsDiffer>false</organismsDiffer>
    <experiments>3</experiments>
</comment>
<comment type="interaction">
    <interactant intactId="EBI-618189">
        <id>Q06547-2</id>
    </interactant>
    <interactant intactId="EBI-25913059">
        <id>Q96HC4-3</id>
        <label>PDLIM5</label>
    </interactant>
    <organismsDiffer>false</organismsDiffer>
    <experiments>3</experiments>
</comment>
<comment type="interaction">
    <interactant intactId="EBI-618189">
        <id>Q06547-2</id>
    </interactant>
    <interactant intactId="EBI-602382">
        <id>Q16512</id>
        <label>PKN1</label>
    </interactant>
    <organismsDiffer>false</organismsDiffer>
    <experiments>3</experiments>
</comment>
<comment type="interaction">
    <interactant intactId="EBI-618189">
        <id>Q06547-2</id>
    </interactant>
    <interactant intactId="EBI-25884072">
        <id>P62937-2</id>
        <label>PPIA</label>
    </interactant>
    <organismsDiffer>false</organismsDiffer>
    <experiments>3</experiments>
</comment>
<comment type="interaction">
    <interactant intactId="EBI-618189">
        <id>Q06547-2</id>
    </interactant>
    <interactant intactId="EBI-359252">
        <id>P23284</id>
        <label>PPIB</label>
    </interactant>
    <organismsDiffer>false</organismsDiffer>
    <experiments>3</experiments>
</comment>
<comment type="interaction">
    <interactant intactId="EBI-618189">
        <id>Q06547-2</id>
    </interactant>
    <interactant intactId="EBI-413628">
        <id>P63000</id>
        <label>RAC1</label>
    </interactant>
    <organismsDiffer>false</organismsDiffer>
    <experiments>3</experiments>
</comment>
<comment type="interaction">
    <interactant intactId="EBI-618189">
        <id>Q06547-2</id>
    </interactant>
    <interactant intactId="EBI-9090795">
        <id>Q15047-2</id>
        <label>SETDB1</label>
    </interactant>
    <organismsDiffer>false</organismsDiffer>
    <experiments>3</experiments>
</comment>
<comment type="interaction">
    <interactant intactId="EBI-618189">
        <id>Q06547-2</id>
    </interactant>
    <interactant intactId="EBI-372899">
        <id>Q13148</id>
        <label>TARDBP</label>
    </interactant>
    <organismsDiffer>false</organismsDiffer>
    <experiments>6</experiments>
</comment>
<comment type="interaction">
    <interactant intactId="EBI-618189">
        <id>Q06547-2</id>
    </interactant>
    <interactant intactId="EBI-741480">
        <id>Q9UMX0</id>
        <label>UBQLN1</label>
    </interactant>
    <organismsDiffer>false</organismsDiffer>
    <experiments>3</experiments>
</comment>
<comment type="interaction">
    <interactant intactId="EBI-618189">
        <id>Q06547-2</id>
    </interactant>
    <interactant intactId="EBI-1052596">
        <id>P31930</id>
        <label>UQCRC1</label>
    </interactant>
    <organismsDiffer>false</organismsDiffer>
    <experiments>3</experiments>
</comment>
<comment type="interaction">
    <interactant intactId="EBI-618189">
        <id>Q06547-2</id>
    </interactant>
    <interactant intactId="EBI-357430">
        <id>P61758</id>
        <label>VBP1</label>
    </interactant>
    <organismsDiffer>false</organismsDiffer>
    <experiments>3</experiments>
</comment>
<comment type="interaction">
    <interactant intactId="EBI-618189">
        <id>Q06547-2</id>
    </interactant>
    <interactant intactId="EBI-359832">
        <id>P61981</id>
        <label>YWHAG</label>
    </interactant>
    <organismsDiffer>false</organismsDiffer>
    <experiments>3</experiments>
</comment>
<comment type="interaction">
    <interactant intactId="EBI-618189">
        <id>Q06547-2</id>
    </interactant>
    <interactant intactId="EBI-25900580">
        <id>Q9Y649</id>
    </interactant>
    <organismsDiffer>false</organismsDiffer>
    <experiments>3</experiments>
</comment>
<comment type="interaction">
    <interactant intactId="EBI-9088619">
        <id>Q06547-3</id>
    </interactant>
    <interactant intactId="EBI-718729">
        <id>P55212</id>
        <label>CASP6</label>
    </interactant>
    <organismsDiffer>false</organismsDiffer>
    <experiments>3</experiments>
</comment>
<comment type="interaction">
    <interactant intactId="EBI-9088619">
        <id>Q06547-3</id>
    </interactant>
    <interactant intactId="EBI-6624398">
        <id>P06307</id>
        <label>CCK</label>
    </interactant>
    <organismsDiffer>false</organismsDiffer>
    <experiments>3</experiments>
</comment>
<comment type="interaction">
    <interactant intactId="EBI-9088619">
        <id>Q06547-3</id>
    </interactant>
    <interactant intactId="EBI-25837549">
        <id>P28329-3</id>
        <label>CHAT</label>
    </interactant>
    <organismsDiffer>false</organismsDiffer>
    <experiments>3</experiments>
</comment>
<comment type="interaction">
    <interactant intactId="EBI-9088619">
        <id>Q06547-3</id>
    </interactant>
    <interactant intactId="EBI-21553822">
        <id>Q96A83-2</id>
        <label>COL26A1</label>
    </interactant>
    <organismsDiffer>false</organismsDiffer>
    <experiments>3</experiments>
</comment>
<comment type="interaction">
    <interactant intactId="EBI-9088619">
        <id>Q06547-3</id>
    </interactant>
    <interactant intactId="EBI-357034">
        <id>P25685</id>
        <label>DNAJB1</label>
    </interactant>
    <organismsDiffer>false</organismsDiffer>
    <experiments>3</experiments>
</comment>
<comment type="interaction">
    <interactant intactId="EBI-9088619">
        <id>Q06547-3</id>
    </interactant>
    <interactant intactId="EBI-395638">
        <id>O14645</id>
        <label>DNALI1</label>
    </interactant>
    <organismsDiffer>false</organismsDiffer>
    <experiments>3</experiments>
</comment>
<comment type="interaction">
    <interactant intactId="EBI-9088619">
        <id>Q06547-3</id>
    </interactant>
    <interactant intactId="EBI-1054228">
        <id>P41091</id>
        <label>EIF2S3</label>
    </interactant>
    <organismsDiffer>false</organismsDiffer>
    <experiments>3</experiments>
</comment>
<comment type="interaction">
    <interactant intactId="EBI-9088619">
        <id>Q06547-3</id>
    </interactant>
    <interactant intactId="EBI-25852368">
        <id>O75460-2</id>
        <label>ERN1</label>
    </interactant>
    <organismsDiffer>false</organismsDiffer>
    <experiments>3</experiments>
</comment>
<comment type="interaction">
    <interactant intactId="EBI-9088619">
        <id>Q06547-3</id>
    </interactant>
    <interactant intactId="EBI-348399">
        <id>P22607</id>
        <label>FGFR3</label>
    </interactant>
    <organismsDiffer>false</organismsDiffer>
    <experiments>3</experiments>
</comment>
<comment type="interaction">
    <interactant intactId="EBI-9088619">
        <id>Q06547-3</id>
    </interactant>
    <interactant intactId="EBI-10226858">
        <id>Q0VDC6</id>
        <label>FKBP1A</label>
    </interactant>
    <organismsDiffer>false</organismsDiffer>
    <experiments>3</experiments>
</comment>
<comment type="interaction">
    <interactant intactId="EBI-9088619">
        <id>Q06547-3</id>
    </interactant>
    <interactant intactId="EBI-351506">
        <id>P06396</id>
        <label>GSN</label>
    </interactant>
    <organismsDiffer>false</organismsDiffer>
    <experiments>3</experiments>
</comment>
<comment type="interaction">
    <interactant intactId="EBI-9088619">
        <id>Q06547-3</id>
    </interactant>
    <interactant intactId="EBI-473886">
        <id>O00291</id>
        <label>HIP1</label>
    </interactant>
    <organismsDiffer>false</organismsDiffer>
    <experiments>3</experiments>
</comment>
<comment type="interaction">
    <interactant intactId="EBI-9088619">
        <id>Q06547-3</id>
    </interactant>
    <interactant intactId="EBI-356991">
        <id>P54652</id>
        <label>HSPA2</label>
    </interactant>
    <organismsDiffer>false</organismsDiffer>
    <experiments>3</experiments>
</comment>
<comment type="interaction">
    <interactant intactId="EBI-9088619">
        <id>Q06547-3</id>
    </interactant>
    <interactant intactId="EBI-399080">
        <id>Q92993</id>
        <label>KAT5</label>
    </interactant>
    <organismsDiffer>false</organismsDiffer>
    <experiments>3</experiments>
</comment>
<comment type="interaction">
    <interactant intactId="EBI-9088619">
        <id>Q06547-3</id>
    </interactant>
    <interactant intactId="EBI-948266">
        <id>O14901</id>
        <label>KLF11</label>
    </interactant>
    <organismsDiffer>false</organismsDiffer>
    <experiments>3</experiments>
</comment>
<comment type="interaction">
    <interactant intactId="EBI-9088619">
        <id>Q06547-3</id>
    </interactant>
    <interactant intactId="EBI-21591415">
        <id>P13473-2</id>
        <label>LAMP2</label>
    </interactant>
    <organismsDiffer>false</organismsDiffer>
    <experiments>3</experiments>
</comment>
<comment type="interaction">
    <interactant intactId="EBI-9088619">
        <id>Q06547-3</id>
    </interactant>
    <interactant intactId="EBI-11742507">
        <id>Q8TAP4-4</id>
        <label>LMO3</label>
    </interactant>
    <organismsDiffer>false</organismsDiffer>
    <experiments>3</experiments>
</comment>
<comment type="interaction">
    <interactant intactId="EBI-9088619">
        <id>Q06547-3</id>
    </interactant>
    <interactant intactId="EBI-2811583">
        <id>Q9BVL2</id>
        <label>NUP58</label>
    </interactant>
    <organismsDiffer>false</organismsDiffer>
    <experiments>3</experiments>
</comment>
<comment type="interaction">
    <interactant intactId="EBI-9088619">
        <id>Q06547-3</id>
    </interactant>
    <interactant intactId="EBI-25913059">
        <id>Q96HC4-3</id>
        <label>PDLIM5</label>
    </interactant>
    <organismsDiffer>false</organismsDiffer>
    <experiments>3</experiments>
</comment>
<comment type="interaction">
    <interactant intactId="EBI-9088619">
        <id>Q06547-3</id>
    </interactant>
    <interactant intactId="EBI-25884072">
        <id>P62937-2</id>
        <label>PPIA</label>
    </interactant>
    <organismsDiffer>false</organismsDiffer>
    <experiments>3</experiments>
</comment>
<comment type="interaction">
    <interactant intactId="EBI-9088619">
        <id>Q06547-3</id>
    </interactant>
    <interactant intactId="EBI-1383528">
        <id>P17252</id>
        <label>PRKCA</label>
    </interactant>
    <organismsDiffer>false</organismsDiffer>
    <experiments>3</experiments>
</comment>
<comment type="interaction">
    <interactant intactId="EBI-9088619">
        <id>Q06547-3</id>
    </interactant>
    <interactant intactId="EBI-286642">
        <id>P62826</id>
        <label>RAN</label>
    </interactant>
    <organismsDiffer>false</organismsDiffer>
    <experiments>3</experiments>
</comment>
<comment type="interaction">
    <interactant intactId="EBI-9088619">
        <id>Q06547-3</id>
    </interactant>
    <interactant intactId="EBI-9090795">
        <id>Q15047-2</id>
        <label>SETDB1</label>
    </interactant>
    <organismsDiffer>false</organismsDiffer>
    <experiments>3</experiments>
</comment>
<comment type="interaction">
    <interactant intactId="EBI-9088619">
        <id>Q06547-3</id>
    </interactant>
    <interactant intactId="EBI-624585">
        <id>P62308</id>
        <label>SNRPG</label>
    </interactant>
    <organismsDiffer>false</organismsDiffer>
    <experiments>3</experiments>
</comment>
<comment type="interaction">
    <interactant intactId="EBI-9088619">
        <id>Q06547-3</id>
    </interactant>
    <interactant intactId="EBI-1054052">
        <id>P31948</id>
        <label>STIP1</label>
    </interactant>
    <organismsDiffer>false</organismsDiffer>
    <experiments>3</experiments>
</comment>
<comment type="interaction">
    <interactant intactId="EBI-9088619">
        <id>Q06547-3</id>
    </interactant>
    <interactant intactId="EBI-359832">
        <id>P61981</id>
        <label>YWHAG</label>
    </interactant>
    <organismsDiffer>false</organismsDiffer>
    <experiments>3</experiments>
</comment>
<comment type="interaction">
    <interactant intactId="EBI-9088619">
        <id>Q06547-3</id>
    </interactant>
    <interactant intactId="EBI-25900580">
        <id>Q9Y649</id>
    </interactant>
    <organismsDiffer>false</organismsDiffer>
    <experiments>3</experiments>
</comment>
<comment type="subcellular location">
    <subcellularLocation>
        <location evidence="12 13">Nucleus</location>
    </subcellularLocation>
</comment>
<comment type="alternative products">
    <event type="alternative splicing"/>
    <isoform>
        <id>Q06547-1</id>
        <name>1</name>
        <name>GABPB-1</name>
        <name evidence="8">Beta-1</name>
        <sequence type="displayed"/>
    </isoform>
    <isoform>
        <id>Q06547-2</id>
        <name>2</name>
        <name evidence="8">Beta-2</name>
        <sequence type="described" ref="VSP_000275"/>
    </isoform>
    <isoform>
        <id>Q06547-3</id>
        <name>3</name>
        <name>GABPB-2</name>
        <name evidence="8">Gamma-1</name>
        <sequence type="described" ref="VSP_009337"/>
    </isoform>
    <isoform>
        <id>Q06547-4</id>
        <name>4</name>
        <name evidence="8">Gamma-2</name>
        <sequence type="described" ref="VSP_000275 VSP_009337"/>
    </isoform>
</comment>
<comment type="PTM">
    <text evidence="1">Acetylated by EP300/p300. Deacetylated by SIRT7, promoting heterotetramerization and activity.</text>
</comment>
<proteinExistence type="evidence at protein level"/>
<name>GABP1_HUMAN</name>
<gene>
    <name type="primary">GABPB1</name>
    <name evidence="9" type="synonym">E4TF1B</name>
    <name type="synonym">GABPB</name>
    <name type="synonym">GABPB2</name>
</gene>
<feature type="initiator methionine" description="Removed" evidence="14">
    <location>
        <position position="1"/>
    </location>
</feature>
<feature type="chain" id="PRO_0000066993" description="GA-binding protein subunit beta-1">
    <location>
        <begin position="2"/>
        <end position="395"/>
    </location>
</feature>
<feature type="repeat" description="ANK 1">
    <location>
        <begin position="5"/>
        <end position="34"/>
    </location>
</feature>
<feature type="repeat" description="ANK 2">
    <location>
        <begin position="37"/>
        <end position="66"/>
    </location>
</feature>
<feature type="repeat" description="ANK 3">
    <location>
        <begin position="70"/>
        <end position="99"/>
    </location>
</feature>
<feature type="repeat" description="ANK 4">
    <location>
        <begin position="103"/>
        <end position="132"/>
    </location>
</feature>
<feature type="repeat" description="ANK 5">
    <location>
        <begin position="136"/>
        <end position="166"/>
    </location>
</feature>
<feature type="region of interest" description="Transcription activation and HCFC1 interaction">
    <location>
        <begin position="258"/>
        <end position="327"/>
    </location>
</feature>
<feature type="modified residue" description="N-acetylserine" evidence="14">
    <location>
        <position position="2"/>
    </location>
</feature>
<feature type="modified residue" description="N6-acetyllysine" evidence="1">
    <location>
        <position position="69"/>
    </location>
</feature>
<feature type="modified residue" description="N6-acetyllysine" evidence="1">
    <location>
        <position position="352"/>
    </location>
</feature>
<feature type="modified residue" description="N6-acetyllysine" evidence="1">
    <location>
        <position position="381"/>
    </location>
</feature>
<feature type="splice variant" id="VSP_000275" description="In isoform 2 and isoform 4." evidence="7 8 9">
    <location>
        <begin position="195"/>
        <end position="206"/>
    </location>
</feature>
<feature type="splice variant" id="VSP_009337" description="In isoform 3 and isoform 4." evidence="7 8 10">
    <original>EREALQKQLDEANREAQKYRQQLLKKEQEAEAYRQKLEAMTRLQTNKEAV</original>
    <variation>VRSLLPGVLCRSHPK</variation>
    <location>
        <begin position="346"/>
        <end position="395"/>
    </location>
</feature>
<feature type="sequence variant" id="VAR_035613" description="In a colorectal cancer sample; somatic mutation." evidence="3">
    <original>P</original>
    <variation>A</variation>
    <location>
        <position position="31"/>
    </location>
</feature>
<feature type="mutagenesis site" description="Minor reduction in transcriptional activation; when associated with A-295 or A-305 and A-306." evidence="6">
    <original>QQ</original>
    <variation>AA</variation>
    <location>
        <begin position="262"/>
        <end position="263"/>
    </location>
</feature>
<feature type="mutagenesis site" description="Minor effect upon interaction with HCFC1 and transcriptional activation. Loss of activity; when associated with A-297; A-298 and A-299, or with A-307 and A-310." evidence="2 6">
    <original>VV</original>
    <variation>AA</variation>
    <location>
        <begin position="264"/>
        <end position="265"/>
    </location>
</feature>
<feature type="mutagenesis site" description="Minor reduction in transcriptional activation. Moderate reduction in activity; when associated with A-305 and A-306." evidence="6">
    <original>QQ</original>
    <variation>AA</variation>
    <location>
        <begin position="270"/>
        <end position="271"/>
    </location>
</feature>
<feature type="mutagenesis site" description="Strongly reduces interaction with HCFC1 and transcriptional activation. Loss of activity; when associated with A-297; A-298 and A-299, or with A-307 and A-310." evidence="2 6">
    <original>ITI</original>
    <variation>ATA</variation>
    <location>
        <begin position="273"/>
        <end position="275"/>
    </location>
</feature>
<feature type="mutagenesis site" description="No effect on transcriptional activation. Minor reduction in activity; when associated with A-270 and A-271." evidence="6">
    <original>Q</original>
    <variation>A</variation>
    <location>
        <position position="295"/>
    </location>
</feature>
<feature type="mutagenesis site" description="Strongly reduces interaction with HCFC1 and transcriptional activation. Loss of activity; when associated with A-264 and A-265, or A-273 and A-275." evidence="2 6">
    <original>IIV</original>
    <variation>AAA</variation>
    <location>
        <begin position="297"/>
        <end position="299"/>
    </location>
</feature>
<feature type="mutagenesis site" description="Minor reduction in transcriptional activation. Moderate reduction in activity; when associated with A-270 and A-271." evidence="6">
    <original>QQ</original>
    <variation>AA</variation>
    <location>
        <begin position="305"/>
        <end position="306"/>
    </location>
</feature>
<feature type="mutagenesis site" description="Moderately reduces interaction with HCFC1 and transcriptional activation. Loss of activity; when associated with A-273 and A-275." evidence="2 6">
    <original>VLTV</original>
    <variation>ALTA</variation>
    <location>
        <begin position="307"/>
        <end position="310"/>
    </location>
</feature>
<feature type="sequence conflict" description="In Ref. 7; AA sequence." evidence="11" ref="7">
    <original>H</original>
    <variation>L</variation>
    <location>
        <position position="76"/>
    </location>
</feature>
<feature type="sequence conflict" description="In Ref. 1; BAA02573." evidence="11" ref="1">
    <location>
        <position position="246"/>
    </location>
</feature>
<feature type="sequence conflict" description="In Ref. 6; AAH36080." evidence="11" ref="6">
    <original>T</original>
    <variation>A</variation>
    <location>
        <position position="274"/>
    </location>
</feature>
<feature type="sequence conflict" description="In Ref. 8; AA sequence." evidence="11" ref="8">
    <original>S</original>
    <variation>C</variation>
    <location>
        <position position="341"/>
    </location>
</feature>
<accession>Q06547</accession>
<accession>A8IE52</accession>
<accession>Q06545</accession>
<accession>Q12940</accession>
<accession>Q12941</accession>
<accession>Q12942</accession>
<accession>Q8IYD0</accession>
<organism>
    <name type="scientific">Homo sapiens</name>
    <name type="common">Human</name>
    <dbReference type="NCBI Taxonomy" id="9606"/>
    <lineage>
        <taxon>Eukaryota</taxon>
        <taxon>Metazoa</taxon>
        <taxon>Chordata</taxon>
        <taxon>Craniata</taxon>
        <taxon>Vertebrata</taxon>
        <taxon>Euteleostomi</taxon>
        <taxon>Mammalia</taxon>
        <taxon>Eutheria</taxon>
        <taxon>Euarchontoglires</taxon>
        <taxon>Primates</taxon>
        <taxon>Haplorrhini</taxon>
        <taxon>Catarrhini</taxon>
        <taxon>Hominidae</taxon>
        <taxon>Homo</taxon>
    </lineage>
</organism>
<keyword id="KW-0007">Acetylation</keyword>
<keyword id="KW-0025">Alternative splicing</keyword>
<keyword id="KW-0040">ANK repeat</keyword>
<keyword id="KW-0903">Direct protein sequencing</keyword>
<keyword id="KW-0539">Nucleus</keyword>
<keyword id="KW-1267">Proteomics identification</keyword>
<keyword id="KW-1185">Reference proteome</keyword>
<keyword id="KW-0677">Repeat</keyword>
<keyword id="KW-0804">Transcription</keyword>
<keyword id="KW-0805">Transcription regulation</keyword>